<gene>
    <name evidence="1" type="primary">ycf4</name>
    <name type="ordered locus">Poptr_cp034</name>
</gene>
<dbReference type="EMBL" id="EF489041">
    <property type="protein sequence ID" value="ABO36716.1"/>
    <property type="molecule type" value="Genomic_DNA"/>
</dbReference>
<dbReference type="RefSeq" id="YP_001109513.1">
    <property type="nucleotide sequence ID" value="NC_009143.1"/>
</dbReference>
<dbReference type="FunCoup" id="A4GYS2">
    <property type="interactions" value="103"/>
</dbReference>
<dbReference type="STRING" id="3694.A4GYS2"/>
<dbReference type="EnsemblPlants" id="Potri.013G162400.1.v4.1">
    <property type="protein sequence ID" value="Potri.013G162400.1.v4.1"/>
    <property type="gene ID" value="Potri.013G162400.v4.1"/>
</dbReference>
<dbReference type="GeneID" id="4929681"/>
<dbReference type="Gramene" id="Potri.013G162400.1.v4.1">
    <property type="protein sequence ID" value="Potri.013G162400.1.v4.1"/>
    <property type="gene ID" value="Potri.013G162400.v4.1"/>
</dbReference>
<dbReference type="KEGG" id="pop:4929681"/>
<dbReference type="InParanoid" id="A4GYS2"/>
<dbReference type="OMA" id="RFSNYWW"/>
<dbReference type="OrthoDB" id="827895at2759"/>
<dbReference type="Proteomes" id="UP000006729">
    <property type="component" value="Chloroplast"/>
</dbReference>
<dbReference type="GO" id="GO:0009535">
    <property type="term" value="C:chloroplast thylakoid membrane"/>
    <property type="evidence" value="ECO:0007669"/>
    <property type="project" value="UniProtKB-SubCell"/>
</dbReference>
<dbReference type="GO" id="GO:0009522">
    <property type="term" value="C:photosystem I"/>
    <property type="evidence" value="ECO:0007669"/>
    <property type="project" value="InterPro"/>
</dbReference>
<dbReference type="GO" id="GO:0015979">
    <property type="term" value="P:photosynthesis"/>
    <property type="evidence" value="ECO:0007669"/>
    <property type="project" value="UniProtKB-UniRule"/>
</dbReference>
<dbReference type="HAMAP" id="MF_00437">
    <property type="entry name" value="Ycf4"/>
    <property type="match status" value="1"/>
</dbReference>
<dbReference type="InterPro" id="IPR003359">
    <property type="entry name" value="PSI_Ycf4_assembly"/>
</dbReference>
<dbReference type="PANTHER" id="PTHR33288">
    <property type="match status" value="1"/>
</dbReference>
<dbReference type="PANTHER" id="PTHR33288:SF4">
    <property type="entry name" value="PHOTOSYSTEM I ASSEMBLY PROTEIN YCF4"/>
    <property type="match status" value="1"/>
</dbReference>
<dbReference type="Pfam" id="PF02392">
    <property type="entry name" value="Ycf4"/>
    <property type="match status" value="1"/>
</dbReference>
<evidence type="ECO:0000255" key="1">
    <source>
        <dbReference type="HAMAP-Rule" id="MF_00437"/>
    </source>
</evidence>
<reference key="1">
    <citation type="journal article" date="2006" name="Science">
        <title>The genome of black cottonwood, Populus trichocarpa (Torr. &amp; Gray).</title>
        <authorList>
            <person name="Tuskan G.A."/>
            <person name="Difazio S."/>
            <person name="Jansson S."/>
            <person name="Bohlmann J."/>
            <person name="Grigoriev I."/>
            <person name="Hellsten U."/>
            <person name="Putnam N."/>
            <person name="Ralph S."/>
            <person name="Rombauts S."/>
            <person name="Salamov A."/>
            <person name="Schein J."/>
            <person name="Sterck L."/>
            <person name="Aerts A."/>
            <person name="Bhalerao R.R."/>
            <person name="Bhalerao R.P."/>
            <person name="Blaudez D."/>
            <person name="Boerjan W."/>
            <person name="Brun A."/>
            <person name="Brunner A."/>
            <person name="Busov V."/>
            <person name="Campbell M."/>
            <person name="Carlson J."/>
            <person name="Chalot M."/>
            <person name="Chapman J."/>
            <person name="Chen G.-L."/>
            <person name="Cooper D."/>
            <person name="Coutinho P.M."/>
            <person name="Couturier J."/>
            <person name="Covert S."/>
            <person name="Cronk Q."/>
            <person name="Cunningham R."/>
            <person name="Davis J."/>
            <person name="Degroeve S."/>
            <person name="Dejardin A."/>
            <person name="dePamphilis C.W."/>
            <person name="Detter J."/>
            <person name="Dirks B."/>
            <person name="Dubchak I."/>
            <person name="Duplessis S."/>
            <person name="Ehlting J."/>
            <person name="Ellis B."/>
            <person name="Gendler K."/>
            <person name="Goodstein D."/>
            <person name="Gribskov M."/>
            <person name="Grimwood J."/>
            <person name="Groover A."/>
            <person name="Gunter L."/>
            <person name="Hamberger B."/>
            <person name="Heinze B."/>
            <person name="Helariutta Y."/>
            <person name="Henrissat B."/>
            <person name="Holligan D."/>
            <person name="Holt R."/>
            <person name="Huang W."/>
            <person name="Islam-Faridi N."/>
            <person name="Jones S."/>
            <person name="Jones-Rhoades M."/>
            <person name="Jorgensen R."/>
            <person name="Joshi C."/>
            <person name="Kangasjaervi J."/>
            <person name="Karlsson J."/>
            <person name="Kelleher C."/>
            <person name="Kirkpatrick R."/>
            <person name="Kirst M."/>
            <person name="Kohler A."/>
            <person name="Kalluri U."/>
            <person name="Larimer F."/>
            <person name="Leebens-Mack J."/>
            <person name="Leple J.-C."/>
            <person name="Locascio P."/>
            <person name="Lou Y."/>
            <person name="Lucas S."/>
            <person name="Martin F."/>
            <person name="Montanini B."/>
            <person name="Napoli C."/>
            <person name="Nelson D.R."/>
            <person name="Nelson C."/>
            <person name="Nieminen K."/>
            <person name="Nilsson O."/>
            <person name="Pereda V."/>
            <person name="Peter G."/>
            <person name="Philippe R."/>
            <person name="Pilate G."/>
            <person name="Poliakov A."/>
            <person name="Razumovskaya J."/>
            <person name="Richardson P."/>
            <person name="Rinaldi C."/>
            <person name="Ritland K."/>
            <person name="Rouze P."/>
            <person name="Ryaboy D."/>
            <person name="Schmutz J."/>
            <person name="Schrader J."/>
            <person name="Segerman B."/>
            <person name="Shin H."/>
            <person name="Siddiqui A."/>
            <person name="Sterky F."/>
            <person name="Terry A."/>
            <person name="Tsai C.-J."/>
            <person name="Uberbacher E."/>
            <person name="Unneberg P."/>
            <person name="Vahala J."/>
            <person name="Wall K."/>
            <person name="Wessler S."/>
            <person name="Yang G."/>
            <person name="Yin T."/>
            <person name="Douglas C."/>
            <person name="Marra M."/>
            <person name="Sandberg G."/>
            <person name="Van de Peer Y."/>
            <person name="Rokhsar D.S."/>
        </authorList>
    </citation>
    <scope>NUCLEOTIDE SEQUENCE [LARGE SCALE GENOMIC DNA]</scope>
    <source>
        <strain>cv. Nisqually</strain>
    </source>
</reference>
<proteinExistence type="inferred from homology"/>
<name>YCF4_POPTR</name>
<accession>A4GYS2</accession>
<sequence length="184" mass="21450">MSWRSEHIWIELIAGSRKISNFCWAIILFLGSLGFLLIGISSYLDRNLISLFPSQQILFFPQGIVMSFYGLAGLFISSYLWCTISWNVGSGYDRFDRKEGIVCIFRWGFPGKNRRILLRLFMKDIQSIRIEVKEGFYARRVLYMEIRGQGAIPLTRTDENLTPREIEQKAAELAYFLRVPIEVF</sequence>
<protein>
    <recommendedName>
        <fullName evidence="1">Photosystem I assembly protein Ycf4</fullName>
    </recommendedName>
</protein>
<keyword id="KW-0150">Chloroplast</keyword>
<keyword id="KW-0472">Membrane</keyword>
<keyword id="KW-0602">Photosynthesis</keyword>
<keyword id="KW-0934">Plastid</keyword>
<keyword id="KW-1185">Reference proteome</keyword>
<keyword id="KW-0793">Thylakoid</keyword>
<keyword id="KW-0812">Transmembrane</keyword>
<keyword id="KW-1133">Transmembrane helix</keyword>
<organism>
    <name type="scientific">Populus trichocarpa</name>
    <name type="common">Western balsam poplar</name>
    <name type="synonym">Populus balsamifera subsp. trichocarpa</name>
    <dbReference type="NCBI Taxonomy" id="3694"/>
    <lineage>
        <taxon>Eukaryota</taxon>
        <taxon>Viridiplantae</taxon>
        <taxon>Streptophyta</taxon>
        <taxon>Embryophyta</taxon>
        <taxon>Tracheophyta</taxon>
        <taxon>Spermatophyta</taxon>
        <taxon>Magnoliopsida</taxon>
        <taxon>eudicotyledons</taxon>
        <taxon>Gunneridae</taxon>
        <taxon>Pentapetalae</taxon>
        <taxon>rosids</taxon>
        <taxon>fabids</taxon>
        <taxon>Malpighiales</taxon>
        <taxon>Salicaceae</taxon>
        <taxon>Saliceae</taxon>
        <taxon>Populus</taxon>
    </lineage>
</organism>
<feature type="chain" id="PRO_0000326023" description="Photosystem I assembly protein Ycf4">
    <location>
        <begin position="1"/>
        <end position="184"/>
    </location>
</feature>
<feature type="transmembrane region" description="Helical" evidence="1">
    <location>
        <begin position="22"/>
        <end position="42"/>
    </location>
</feature>
<feature type="transmembrane region" description="Helical" evidence="1">
    <location>
        <begin position="57"/>
        <end position="77"/>
    </location>
</feature>
<comment type="function">
    <text evidence="1">Seems to be required for the assembly of the photosystem I complex.</text>
</comment>
<comment type="subcellular location">
    <subcellularLocation>
        <location evidence="1">Plastid</location>
        <location evidence="1">Chloroplast thylakoid membrane</location>
        <topology evidence="1">Multi-pass membrane protein</topology>
    </subcellularLocation>
</comment>
<comment type="similarity">
    <text evidence="1">Belongs to the Ycf4 family.</text>
</comment>
<geneLocation type="chloroplast"/>